<gene>
    <name evidence="1" type="primary">rhlB</name>
    <name type="ordered locus">VS_3073</name>
</gene>
<organism>
    <name type="scientific">Vibrio atlanticus (strain LGP32)</name>
    <name type="common">Vibrio splendidus (strain Mel32)</name>
    <dbReference type="NCBI Taxonomy" id="575788"/>
    <lineage>
        <taxon>Bacteria</taxon>
        <taxon>Pseudomonadati</taxon>
        <taxon>Pseudomonadota</taxon>
        <taxon>Gammaproteobacteria</taxon>
        <taxon>Vibrionales</taxon>
        <taxon>Vibrionaceae</taxon>
        <taxon>Vibrio</taxon>
    </lineage>
</organism>
<reference key="1">
    <citation type="submission" date="2009-02" db="EMBL/GenBank/DDBJ databases">
        <title>Vibrio splendidus str. LGP32 complete genome.</title>
        <authorList>
            <person name="Mazel D."/>
            <person name="Le Roux F."/>
        </authorList>
    </citation>
    <scope>NUCLEOTIDE SEQUENCE [LARGE SCALE GENOMIC DNA]</scope>
    <source>
        <strain>LGP32</strain>
    </source>
</reference>
<comment type="function">
    <text evidence="1">DEAD-box RNA helicase involved in RNA degradation. Has RNA-dependent ATPase activity and unwinds double-stranded RNA.</text>
</comment>
<comment type="catalytic activity">
    <reaction evidence="1">
        <text>ATP + H2O = ADP + phosphate + H(+)</text>
        <dbReference type="Rhea" id="RHEA:13065"/>
        <dbReference type="ChEBI" id="CHEBI:15377"/>
        <dbReference type="ChEBI" id="CHEBI:15378"/>
        <dbReference type="ChEBI" id="CHEBI:30616"/>
        <dbReference type="ChEBI" id="CHEBI:43474"/>
        <dbReference type="ChEBI" id="CHEBI:456216"/>
        <dbReference type="EC" id="3.6.4.13"/>
    </reaction>
</comment>
<comment type="subunit">
    <text evidence="1">Component of the RNA degradosome, which is a multiprotein complex involved in RNA processing and mRNA degradation.</text>
</comment>
<comment type="subcellular location">
    <subcellularLocation>
        <location evidence="1">Cytoplasm</location>
    </subcellularLocation>
</comment>
<comment type="similarity">
    <text evidence="1">Belongs to the DEAD box helicase family. RhlB subfamily.</text>
</comment>
<dbReference type="EC" id="3.6.4.13" evidence="1"/>
<dbReference type="EMBL" id="FM954972">
    <property type="protein sequence ID" value="CAV20340.1"/>
    <property type="molecule type" value="Genomic_DNA"/>
</dbReference>
<dbReference type="SMR" id="B7VME9"/>
<dbReference type="STRING" id="575788.VS_3073"/>
<dbReference type="KEGG" id="vsp:VS_3073"/>
<dbReference type="eggNOG" id="COG0513">
    <property type="taxonomic scope" value="Bacteria"/>
</dbReference>
<dbReference type="HOGENOM" id="CLU_003041_28_3_6"/>
<dbReference type="Proteomes" id="UP000009100">
    <property type="component" value="Chromosome 1"/>
</dbReference>
<dbReference type="GO" id="GO:0005829">
    <property type="term" value="C:cytosol"/>
    <property type="evidence" value="ECO:0007669"/>
    <property type="project" value="TreeGrafter"/>
</dbReference>
<dbReference type="GO" id="GO:0005524">
    <property type="term" value="F:ATP binding"/>
    <property type="evidence" value="ECO:0007669"/>
    <property type="project" value="UniProtKB-UniRule"/>
</dbReference>
<dbReference type="GO" id="GO:0016887">
    <property type="term" value="F:ATP hydrolysis activity"/>
    <property type="evidence" value="ECO:0007669"/>
    <property type="project" value="RHEA"/>
</dbReference>
<dbReference type="GO" id="GO:0003723">
    <property type="term" value="F:RNA binding"/>
    <property type="evidence" value="ECO:0007669"/>
    <property type="project" value="UniProtKB-UniRule"/>
</dbReference>
<dbReference type="GO" id="GO:0003724">
    <property type="term" value="F:RNA helicase activity"/>
    <property type="evidence" value="ECO:0007669"/>
    <property type="project" value="UniProtKB-UniRule"/>
</dbReference>
<dbReference type="GO" id="GO:0006401">
    <property type="term" value="P:RNA catabolic process"/>
    <property type="evidence" value="ECO:0007669"/>
    <property type="project" value="UniProtKB-UniRule"/>
</dbReference>
<dbReference type="CDD" id="cd00268">
    <property type="entry name" value="DEADc"/>
    <property type="match status" value="1"/>
</dbReference>
<dbReference type="CDD" id="cd18787">
    <property type="entry name" value="SF2_C_DEAD"/>
    <property type="match status" value="1"/>
</dbReference>
<dbReference type="FunFam" id="3.40.50.300:FF:000312">
    <property type="entry name" value="ATP-dependent RNA helicase RhlB"/>
    <property type="match status" value="1"/>
</dbReference>
<dbReference type="Gene3D" id="3.40.50.300">
    <property type="entry name" value="P-loop containing nucleotide triphosphate hydrolases"/>
    <property type="match status" value="2"/>
</dbReference>
<dbReference type="HAMAP" id="MF_00661">
    <property type="entry name" value="DEAD_helicase_RhlB"/>
    <property type="match status" value="1"/>
</dbReference>
<dbReference type="InterPro" id="IPR011545">
    <property type="entry name" value="DEAD/DEAH_box_helicase_dom"/>
</dbReference>
<dbReference type="InterPro" id="IPR050079">
    <property type="entry name" value="DEAD_box_RNA_helicase"/>
</dbReference>
<dbReference type="InterPro" id="IPR014001">
    <property type="entry name" value="Helicase_ATP-bd"/>
</dbReference>
<dbReference type="InterPro" id="IPR001650">
    <property type="entry name" value="Helicase_C-like"/>
</dbReference>
<dbReference type="InterPro" id="IPR027417">
    <property type="entry name" value="P-loop_NTPase"/>
</dbReference>
<dbReference type="InterPro" id="IPR000629">
    <property type="entry name" value="RNA-helicase_DEAD-box_CS"/>
</dbReference>
<dbReference type="InterPro" id="IPR023554">
    <property type="entry name" value="RNA_helicase_ATP-dep_RhlB"/>
</dbReference>
<dbReference type="InterPro" id="IPR014014">
    <property type="entry name" value="RNA_helicase_DEAD_Q_motif"/>
</dbReference>
<dbReference type="NCBIfam" id="NF003419">
    <property type="entry name" value="PRK04837.1"/>
    <property type="match status" value="1"/>
</dbReference>
<dbReference type="PANTHER" id="PTHR47959:SF10">
    <property type="entry name" value="ATP-DEPENDENT RNA HELICASE RHLB"/>
    <property type="match status" value="1"/>
</dbReference>
<dbReference type="PANTHER" id="PTHR47959">
    <property type="entry name" value="ATP-DEPENDENT RNA HELICASE RHLE-RELATED"/>
    <property type="match status" value="1"/>
</dbReference>
<dbReference type="Pfam" id="PF00270">
    <property type="entry name" value="DEAD"/>
    <property type="match status" value="1"/>
</dbReference>
<dbReference type="Pfam" id="PF00271">
    <property type="entry name" value="Helicase_C"/>
    <property type="match status" value="1"/>
</dbReference>
<dbReference type="SMART" id="SM00487">
    <property type="entry name" value="DEXDc"/>
    <property type="match status" value="1"/>
</dbReference>
<dbReference type="SMART" id="SM00490">
    <property type="entry name" value="HELICc"/>
    <property type="match status" value="1"/>
</dbReference>
<dbReference type="SUPFAM" id="SSF52540">
    <property type="entry name" value="P-loop containing nucleoside triphosphate hydrolases"/>
    <property type="match status" value="1"/>
</dbReference>
<dbReference type="PROSITE" id="PS00039">
    <property type="entry name" value="DEAD_ATP_HELICASE"/>
    <property type="match status" value="1"/>
</dbReference>
<dbReference type="PROSITE" id="PS51192">
    <property type="entry name" value="HELICASE_ATP_BIND_1"/>
    <property type="match status" value="1"/>
</dbReference>
<dbReference type="PROSITE" id="PS51194">
    <property type="entry name" value="HELICASE_CTER"/>
    <property type="match status" value="1"/>
</dbReference>
<dbReference type="PROSITE" id="PS51195">
    <property type="entry name" value="Q_MOTIF"/>
    <property type="match status" value="1"/>
</dbReference>
<name>RHLB_VIBA3</name>
<evidence type="ECO:0000255" key="1">
    <source>
        <dbReference type="HAMAP-Rule" id="MF_00661"/>
    </source>
</evidence>
<evidence type="ECO:0000256" key="2">
    <source>
        <dbReference type="SAM" id="MobiDB-lite"/>
    </source>
</evidence>
<sequence>MKKTHITEQKFADLDLLPQVIEGLEKKGFDYCTPIQALALPVLLTGQDIAGQAQTGTGKTLAFLTATFNHLLKTPEHEGRKPNQPRAIIMAPTRELAIQIYNDADSLVASTGIKAALAYGGESYDKQLGKIEEGADILIGTTGRIIDFYKQKVFNLNHIQAVVLDEADRMFDLGFIKDIRFLFRRMPEPKDRLNMLFSATLSYRVQELAFEHMHNPEHVVVEPERKTGHRIQEELFYPSNEHKMALLQTLIEEEWPDRAIIFANTKHKCESVWGHLAADGHRVGLLTGDVPQKKREKILEQFTKGDVDLLVATDVAARGLHIPQVTHVFNFDLPDDCEDYVHRIGRTGRAGESGHSISFACEDYAINLPPIEEYIEHAIPMSDYDASALLEDLPAPMRLRTRNPQQRRSNNNGPRNGNRKPNQNRRPRQPRHNKEA</sequence>
<feature type="chain" id="PRO_1000147586" description="ATP-dependent RNA helicase RhlB">
    <location>
        <begin position="1"/>
        <end position="436"/>
    </location>
</feature>
<feature type="domain" description="Helicase ATP-binding" evidence="1">
    <location>
        <begin position="40"/>
        <end position="219"/>
    </location>
</feature>
<feature type="domain" description="Helicase C-terminal" evidence="1">
    <location>
        <begin position="245"/>
        <end position="390"/>
    </location>
</feature>
<feature type="region of interest" description="Disordered" evidence="2">
    <location>
        <begin position="398"/>
        <end position="436"/>
    </location>
</feature>
<feature type="short sequence motif" description="Q motif">
    <location>
        <begin position="9"/>
        <end position="37"/>
    </location>
</feature>
<feature type="short sequence motif" description="DEAD box">
    <location>
        <begin position="165"/>
        <end position="168"/>
    </location>
</feature>
<feature type="compositionally biased region" description="Low complexity" evidence="2">
    <location>
        <begin position="402"/>
        <end position="421"/>
    </location>
</feature>
<feature type="compositionally biased region" description="Basic residues" evidence="2">
    <location>
        <begin position="422"/>
        <end position="436"/>
    </location>
</feature>
<feature type="binding site" evidence="1">
    <location>
        <begin position="53"/>
        <end position="60"/>
    </location>
    <ligand>
        <name>ATP</name>
        <dbReference type="ChEBI" id="CHEBI:30616"/>
    </ligand>
</feature>
<accession>B7VME9</accession>
<keyword id="KW-0067">ATP-binding</keyword>
<keyword id="KW-0963">Cytoplasm</keyword>
<keyword id="KW-0347">Helicase</keyword>
<keyword id="KW-0378">Hydrolase</keyword>
<keyword id="KW-0547">Nucleotide-binding</keyword>
<keyword id="KW-0694">RNA-binding</keyword>
<protein>
    <recommendedName>
        <fullName evidence="1">ATP-dependent RNA helicase RhlB</fullName>
        <ecNumber evidence="1">3.6.4.13</ecNumber>
    </recommendedName>
</protein>
<proteinExistence type="inferred from homology"/>